<proteinExistence type="predicted"/>
<name>VP03_ALHV1</name>
<keyword id="KW-1185">Reference proteome</keyword>
<keyword id="KW-0946">Virion</keyword>
<keyword id="KW-0920">Virion tegument</keyword>
<dbReference type="EMBL" id="AF005370">
    <property type="protein sequence ID" value="AAC58056.1"/>
    <property type="molecule type" value="Genomic_DNA"/>
</dbReference>
<dbReference type="PIR" id="T03104">
    <property type="entry name" value="T03104"/>
</dbReference>
<dbReference type="RefSeq" id="NP_065508.1">
    <property type="nucleotide sequence ID" value="NC_002531.1"/>
</dbReference>
<dbReference type="SMR" id="Q77ZF7"/>
<dbReference type="KEGG" id="vg:911792"/>
<dbReference type="Proteomes" id="UP000000941">
    <property type="component" value="Segment"/>
</dbReference>
<dbReference type="GO" id="GO:0043657">
    <property type="term" value="C:host cell"/>
    <property type="evidence" value="ECO:0007669"/>
    <property type="project" value="GOC"/>
</dbReference>
<dbReference type="GO" id="GO:0019033">
    <property type="term" value="C:viral tegument"/>
    <property type="evidence" value="ECO:0007669"/>
    <property type="project" value="UniProtKB-SubCell"/>
</dbReference>
<dbReference type="GO" id="GO:0004642">
    <property type="term" value="F:phosphoribosylformylglycinamidine synthase activity"/>
    <property type="evidence" value="ECO:0007669"/>
    <property type="project" value="TreeGrafter"/>
</dbReference>
<dbReference type="GO" id="GO:0075733">
    <property type="term" value="P:intracellular transport of virus"/>
    <property type="evidence" value="ECO:0007669"/>
    <property type="project" value="InterPro"/>
</dbReference>
<dbReference type="GO" id="GO:0006164">
    <property type="term" value="P:purine nucleotide biosynthetic process"/>
    <property type="evidence" value="ECO:0007669"/>
    <property type="project" value="TreeGrafter"/>
</dbReference>
<dbReference type="Gene3D" id="3.40.50.880">
    <property type="match status" value="1"/>
</dbReference>
<dbReference type="Gene3D" id="3.90.650.10">
    <property type="entry name" value="PurM-like C-terminal domain"/>
    <property type="match status" value="1"/>
</dbReference>
<dbReference type="InterPro" id="IPR029062">
    <property type="entry name" value="Class_I_gatase-like"/>
</dbReference>
<dbReference type="InterPro" id="IPR010077">
    <property type="entry name" value="Herpes_virus_tegument"/>
</dbReference>
<dbReference type="InterPro" id="IPR010918">
    <property type="entry name" value="PurM-like_C_dom"/>
</dbReference>
<dbReference type="InterPro" id="IPR036676">
    <property type="entry name" value="PurM-like_C_sf"/>
</dbReference>
<dbReference type="InterPro" id="IPR036921">
    <property type="entry name" value="PurM-like_N_sf"/>
</dbReference>
<dbReference type="NCBIfam" id="TIGR01739">
    <property type="entry name" value="tegu_FGAM_synt"/>
    <property type="match status" value="1"/>
</dbReference>
<dbReference type="PANTHER" id="PTHR10099">
    <property type="entry name" value="PHOSPHORIBOSYLFORMYLGLYCINAMIDINE SYNTHASE"/>
    <property type="match status" value="1"/>
</dbReference>
<dbReference type="PANTHER" id="PTHR10099:SF1">
    <property type="entry name" value="PHOSPHORIBOSYLFORMYLGLYCINAMIDINE SYNTHASE"/>
    <property type="match status" value="1"/>
</dbReference>
<dbReference type="Pfam" id="PF02769">
    <property type="entry name" value="AIRS_C"/>
    <property type="match status" value="1"/>
</dbReference>
<dbReference type="Pfam" id="PF13507">
    <property type="entry name" value="GATase_5"/>
    <property type="match status" value="1"/>
</dbReference>
<dbReference type="SMART" id="SM01211">
    <property type="entry name" value="GATase_5"/>
    <property type="match status" value="1"/>
</dbReference>
<dbReference type="SUPFAM" id="SSF52317">
    <property type="entry name" value="Class I glutamine amidotransferase-like"/>
    <property type="match status" value="1"/>
</dbReference>
<dbReference type="SUPFAM" id="SSF56042">
    <property type="entry name" value="PurM C-terminal domain-like"/>
    <property type="match status" value="1"/>
</dbReference>
<dbReference type="SUPFAM" id="SSF55326">
    <property type="entry name" value="PurM N-terminal domain-like"/>
    <property type="match status" value="1"/>
</dbReference>
<sequence length="1369" mass="152598">MITRELQLLAYTAEPSALETAAIAALRSIPGLQNVIIQTQDAYLVTFFTSPRPLREHQLKIETLLFIKAALRTFDEQQYLPIPLSALSSSFTFVYGPDINRLPTSQSNELTAILQTRDAREKVFNVERIQHCRLLFFSGPGSEQLNHTHYALLREILCGDLTLYQPFRNELFNSSLDFYATIYPPRFLKDKVRHYVHGDINLNITGAASNYNWASPHTAVTDSEIFRIPYTHVVRFIDRWEIRVRVPDVGFHGSRGVRFRQHGGAAYMCSTLNSTTGATGCLQKGMITSFISQPTLGQLGLITEPMCGWGQQELSATAIQMLTKYANTVEAFAKTLNYAGVPLVQGFVTLSPTLREKRAMAFTGSLSITGLPPYILKPPTAETLDAAMERNRQLLLVEVGYPDYGKGKLHNPVNIMNSESGRHAHILHQALRQLMIITPFGKVIHICCDWQYNEKVTMFKIAKACGDLGLSMSARSLPAHTLRLLKKWNFRNLNYNHRIIKNSWLKVDSAAALVVIADNEYQDVSKKMDIALSGWGCPFHILGNLTPNSNTIVISDKNQYGEIVDIQYKMHMPKQPSEGTEDTPLAPDMSNIQLFKNLDVTEDLLLQVLRHPTVGCKAHIVHHVDRCGNGHIAQQPGVGPFDIPLCDFSVTVHNLVDGDIREGMESVPRVWAADWRVARRLIETQYSTPGLDITDATLANNLGLTYHIPSEHQVTVESKKYGNCIGIGEKTTFTQRDPLLGTILAIVESCTNCILGPVENYEEFLIGLSISVPEGIHYRHEVNSIMAMAKDFCSSMNFGFQVNSAENGNCLLRSVVATANAPCVVPGPSLKPYFKKPGSAILRVNLHTEHFLSGGICCMASGIGASETFTPTPSQLRNLLQFMLIVKAENLALSGHDVSDGGLICAVCEMMFAGGLSARLIIHDEDEEPVFPLFSETPGFVLEVNAIDVAAIIARANLYNVECIQIGEVVESDTFTVFHQNTQLLSVPVSRLKHNWTLFSKSVDLLYVKEDQVLPEETSYGNYEVHLTVDPYSIISQSTTRPNVLVHLLPGCGYPDALLAALTNSGFSPDTVVYPGCKYRHNRREDAAPGSPTADDFIAGIVLYGSSNIDSDVGDSTIRQWLNVNRQVINDVRRNLKAKGSFTLAIGQLACRILFATKAIGFDAGSQQTPFLLPNASRRYESRWLNFKIPEDTKAVAFRDLRGCVLPCWVQGTHLGFSHNNITFFGDLETRQQVAATFNGPLVQSGPAREYPLNPTEAEHPYAGLCSEDGRHLALLFDPCLAFNTWQWQHNQTGPGQGELPVSPWKLMFYRLYNWSKFHQHYRSLLRTNLRHTFNFETQQLDFPHADRRGAVPHDNPQYIPMDAMDPSQ</sequence>
<organismHost>
    <name type="scientific">Connochaetes taurinus</name>
    <name type="common">Blue wildebeest</name>
    <dbReference type="NCBI Taxonomy" id="9927"/>
</organismHost>
<feature type="chain" id="PRO_0000405699" description="Probable tegument protein antigen 3">
    <location>
        <begin position="1"/>
        <end position="1369"/>
    </location>
</feature>
<feature type="region of interest" description="Disordered" evidence="1">
    <location>
        <begin position="1347"/>
        <end position="1369"/>
    </location>
</feature>
<accession>Q77ZF7</accession>
<protein>
    <recommendedName>
        <fullName>Probable tegument protein antigen 3</fullName>
    </recommendedName>
</protein>
<evidence type="ECO:0000256" key="1">
    <source>
        <dbReference type="SAM" id="MobiDB-lite"/>
    </source>
</evidence>
<evidence type="ECO:0000305" key="2"/>
<comment type="subcellular location">
    <subcellularLocation>
        <location evidence="2">Virion tegument</location>
    </subcellularLocation>
</comment>
<organism>
    <name type="scientific">Alcelaphine herpesvirus 1 (strain C500)</name>
    <name type="common">AlHV-1</name>
    <name type="synonym">Malignant catarrhal fever virus</name>
    <dbReference type="NCBI Taxonomy" id="654901"/>
    <lineage>
        <taxon>Viruses</taxon>
        <taxon>Duplodnaviria</taxon>
        <taxon>Heunggongvirae</taxon>
        <taxon>Peploviricota</taxon>
        <taxon>Herviviricetes</taxon>
        <taxon>Herpesvirales</taxon>
        <taxon>Orthoherpesviridae</taxon>
        <taxon>Gammaherpesvirinae</taxon>
        <taxon>Macavirus</taxon>
        <taxon>Macavirus alcelaphinegamma1</taxon>
    </lineage>
</organism>
<gene>
    <name type="primary">3</name>
</gene>
<reference key="1">
    <citation type="journal article" date="1997" name="J. Virol.">
        <title>Primary structure of the alcelaphine herpesvirus 1 genome.</title>
        <authorList>
            <person name="Ensser A."/>
            <person name="Pflanz R."/>
            <person name="Fleckenstein B."/>
        </authorList>
    </citation>
    <scope>NUCLEOTIDE SEQUENCE [LARGE SCALE GENOMIC DNA]</scope>
</reference>